<feature type="chain" id="PRO_0000405106" description="Nuclear distribution protein PAC1-1">
    <location>
        <begin position="1"/>
        <end position="460"/>
    </location>
</feature>
<feature type="domain" description="LisH" evidence="1">
    <location>
        <begin position="9"/>
        <end position="41"/>
    </location>
</feature>
<feature type="repeat" description="WD 1">
    <location>
        <begin position="120"/>
        <end position="161"/>
    </location>
</feature>
<feature type="repeat" description="WD 2">
    <location>
        <begin position="163"/>
        <end position="203"/>
    </location>
</feature>
<feature type="repeat" description="WD 3">
    <location>
        <begin position="207"/>
        <end position="247"/>
    </location>
</feature>
<feature type="repeat" description="WD 4">
    <location>
        <begin position="250"/>
        <end position="289"/>
    </location>
</feature>
<feature type="repeat" description="WD 5">
    <location>
        <begin position="294"/>
        <end position="354"/>
    </location>
</feature>
<feature type="repeat" description="WD 6">
    <location>
        <begin position="355"/>
        <end position="394"/>
    </location>
</feature>
<feature type="repeat" description="WD 7">
    <location>
        <begin position="399"/>
        <end position="439"/>
    </location>
</feature>
<feature type="repeat" description="WD 8">
    <location>
        <begin position="441"/>
        <end position="460"/>
    </location>
</feature>
<feature type="region of interest" description="Disordered" evidence="2">
    <location>
        <begin position="90"/>
        <end position="115"/>
    </location>
</feature>
<feature type="coiled-coil region" evidence="1">
    <location>
        <begin position="74"/>
        <end position="96"/>
    </location>
</feature>
<feature type="compositionally biased region" description="Polar residues" evidence="2">
    <location>
        <begin position="90"/>
        <end position="100"/>
    </location>
</feature>
<name>LIS11_SORMK</name>
<dbReference type="EMBL" id="CABT02000032">
    <property type="protein sequence ID" value="CCC12952.1"/>
    <property type="molecule type" value="Genomic_DNA"/>
</dbReference>
<dbReference type="RefSeq" id="XP_003349399.1">
    <property type="nucleotide sequence ID" value="XM_003349351.1"/>
</dbReference>
<dbReference type="SMR" id="D1ZEB4"/>
<dbReference type="FunCoup" id="D1ZEB4">
    <property type="interactions" value="50"/>
</dbReference>
<dbReference type="STRING" id="771870.D1ZEB4"/>
<dbReference type="GeneID" id="10806916"/>
<dbReference type="KEGG" id="smp:10806916"/>
<dbReference type="VEuPathDB" id="FungiDB:SMAC_06094"/>
<dbReference type="eggNOG" id="KOG0295">
    <property type="taxonomic scope" value="Eukaryota"/>
</dbReference>
<dbReference type="HOGENOM" id="CLU_000288_57_15_1"/>
<dbReference type="InParanoid" id="D1ZEB4"/>
<dbReference type="OMA" id="WHVATKE"/>
<dbReference type="OrthoDB" id="10264588at2759"/>
<dbReference type="Proteomes" id="UP000001881">
    <property type="component" value="Unassembled WGS sequence"/>
</dbReference>
<dbReference type="GO" id="GO:0005737">
    <property type="term" value="C:cytoplasm"/>
    <property type="evidence" value="ECO:0007669"/>
    <property type="project" value="UniProtKB-UniRule"/>
</dbReference>
<dbReference type="GO" id="GO:0005874">
    <property type="term" value="C:microtubule"/>
    <property type="evidence" value="ECO:0007669"/>
    <property type="project" value="UniProtKB-KW"/>
</dbReference>
<dbReference type="GO" id="GO:0005875">
    <property type="term" value="C:microtubule associated complex"/>
    <property type="evidence" value="ECO:0007669"/>
    <property type="project" value="UniProtKB-UniRule"/>
</dbReference>
<dbReference type="GO" id="GO:0000922">
    <property type="term" value="C:spindle pole"/>
    <property type="evidence" value="ECO:0007669"/>
    <property type="project" value="UniProtKB-SubCell"/>
</dbReference>
<dbReference type="GO" id="GO:1990234">
    <property type="term" value="C:transferase complex"/>
    <property type="evidence" value="ECO:0007669"/>
    <property type="project" value="UniProtKB-ARBA"/>
</dbReference>
<dbReference type="GO" id="GO:0070840">
    <property type="term" value="F:dynein complex binding"/>
    <property type="evidence" value="ECO:0007669"/>
    <property type="project" value="UniProtKB-UniRule"/>
</dbReference>
<dbReference type="GO" id="GO:0051301">
    <property type="term" value="P:cell division"/>
    <property type="evidence" value="ECO:0007669"/>
    <property type="project" value="UniProtKB-KW"/>
</dbReference>
<dbReference type="GO" id="GO:0000132">
    <property type="term" value="P:establishment of mitotic spindle orientation"/>
    <property type="evidence" value="ECO:0007669"/>
    <property type="project" value="UniProtKB-UniRule"/>
</dbReference>
<dbReference type="GO" id="GO:0051012">
    <property type="term" value="P:microtubule sliding"/>
    <property type="evidence" value="ECO:0007669"/>
    <property type="project" value="UniProtKB-UniRule"/>
</dbReference>
<dbReference type="CDD" id="cd00200">
    <property type="entry name" value="WD40"/>
    <property type="match status" value="1"/>
</dbReference>
<dbReference type="FunFam" id="2.130.10.10:FF:000342">
    <property type="entry name" value="Nuclear distribution protein PAC1"/>
    <property type="match status" value="1"/>
</dbReference>
<dbReference type="FunFam" id="1.20.960.30:FF:000002">
    <property type="entry name" value="Platelet-activating factor acetylhydrolase ib"/>
    <property type="match status" value="1"/>
</dbReference>
<dbReference type="Gene3D" id="1.20.960.30">
    <property type="match status" value="1"/>
</dbReference>
<dbReference type="Gene3D" id="2.130.10.10">
    <property type="entry name" value="YVTN repeat-like/Quinoprotein amine dehydrogenase"/>
    <property type="match status" value="1"/>
</dbReference>
<dbReference type="HAMAP" id="MF_03141">
    <property type="entry name" value="lis1"/>
    <property type="match status" value="1"/>
</dbReference>
<dbReference type="InterPro" id="IPR017252">
    <property type="entry name" value="Dynein_regulator_LIS1"/>
</dbReference>
<dbReference type="InterPro" id="IPR020472">
    <property type="entry name" value="G-protein_beta_WD-40_rep"/>
</dbReference>
<dbReference type="InterPro" id="IPR037190">
    <property type="entry name" value="LIS1_N"/>
</dbReference>
<dbReference type="InterPro" id="IPR006594">
    <property type="entry name" value="LisH"/>
</dbReference>
<dbReference type="InterPro" id="IPR056795">
    <property type="entry name" value="PAC1-like_LisH-like_dom"/>
</dbReference>
<dbReference type="InterPro" id="IPR015943">
    <property type="entry name" value="WD40/YVTN_repeat-like_dom_sf"/>
</dbReference>
<dbReference type="InterPro" id="IPR019775">
    <property type="entry name" value="WD40_repeat_CS"/>
</dbReference>
<dbReference type="InterPro" id="IPR036322">
    <property type="entry name" value="WD40_repeat_dom_sf"/>
</dbReference>
<dbReference type="InterPro" id="IPR001680">
    <property type="entry name" value="WD40_rpt"/>
</dbReference>
<dbReference type="PANTHER" id="PTHR22847:SF637">
    <property type="entry name" value="WD REPEAT DOMAIN 5B"/>
    <property type="match status" value="1"/>
</dbReference>
<dbReference type="PANTHER" id="PTHR22847">
    <property type="entry name" value="WD40 REPEAT PROTEIN"/>
    <property type="match status" value="1"/>
</dbReference>
<dbReference type="Pfam" id="PF24951">
    <property type="entry name" value="LisH_PAC1"/>
    <property type="match status" value="1"/>
</dbReference>
<dbReference type="Pfam" id="PF00400">
    <property type="entry name" value="WD40"/>
    <property type="match status" value="6"/>
</dbReference>
<dbReference type="PIRSF" id="PIRSF037647">
    <property type="entry name" value="Dynein_regulator_Lis1"/>
    <property type="match status" value="1"/>
</dbReference>
<dbReference type="PRINTS" id="PR00320">
    <property type="entry name" value="GPROTEINBRPT"/>
</dbReference>
<dbReference type="SMART" id="SM00320">
    <property type="entry name" value="WD40"/>
    <property type="match status" value="7"/>
</dbReference>
<dbReference type="SUPFAM" id="SSF109925">
    <property type="entry name" value="Lissencephaly-1 protein (Lis-1, PAF-AH alpha) N-terminal domain"/>
    <property type="match status" value="1"/>
</dbReference>
<dbReference type="SUPFAM" id="SSF50978">
    <property type="entry name" value="WD40 repeat-like"/>
    <property type="match status" value="1"/>
</dbReference>
<dbReference type="PROSITE" id="PS50896">
    <property type="entry name" value="LISH"/>
    <property type="match status" value="1"/>
</dbReference>
<dbReference type="PROSITE" id="PS00678">
    <property type="entry name" value="WD_REPEATS_1"/>
    <property type="match status" value="3"/>
</dbReference>
<dbReference type="PROSITE" id="PS50082">
    <property type="entry name" value="WD_REPEATS_2"/>
    <property type="match status" value="6"/>
</dbReference>
<dbReference type="PROSITE" id="PS50294">
    <property type="entry name" value="WD_REPEATS_REGION"/>
    <property type="match status" value="1"/>
</dbReference>
<sequence>MSQILTSRQADELHRALIAYLTAANLPNTAAALREELNLGEDVFDPATAKKYEGLLEKKWTSVVRLQKKSLTPLVTQIMDLESRNHILQSELDNATPTSRQNKDPVAWLPRAPPRHTLQSHRDPITCVAFHPVFSSLASGSEDQTIKIWDWELGELERTIKGHTKAVLDVDYGGPRGNTLLASCSSDLTIKLWDPLDSYKNIRTLPGHDHSVSAVRFIPGSGNLLVSASRDKTLRIWDVSTGYCVKTLRGHAEWVRDVCPSFDGKYILSTSDDYTSRLWDVTVTNPEPRVTLIGHEHVVLCCAIAPPAAYQNLAAMAGIKKPPATSSAEFMATGSRDKSIRLWDARGTCIKTLAGHDNWVRGLVFHPGGKYLLSVSDDKTLRCWDLTQEGKCVKTIGDAHGHFVQCIRWAPSVIKDVSVNGDNGEPNGTPKKGAAVTPDSQIRCVIATGSVDLNVRIFAN</sequence>
<accession>D1ZEB4</accession>
<accession>F7W614</accession>
<evidence type="ECO:0000255" key="1">
    <source>
        <dbReference type="HAMAP-Rule" id="MF_03141"/>
    </source>
</evidence>
<evidence type="ECO:0000256" key="2">
    <source>
        <dbReference type="SAM" id="MobiDB-lite"/>
    </source>
</evidence>
<protein>
    <recommendedName>
        <fullName evidence="1">Nuclear distribution protein PAC1-1</fullName>
    </recommendedName>
    <alternativeName>
        <fullName evidence="1">Lissencephaly-1 homolog 1</fullName>
        <shortName evidence="1">LIS-1 1</shortName>
    </alternativeName>
    <alternativeName>
        <fullName evidence="1">nudF homolog 1</fullName>
    </alternativeName>
</protein>
<keyword id="KW-0131">Cell cycle</keyword>
<keyword id="KW-0132">Cell division</keyword>
<keyword id="KW-0175">Coiled coil</keyword>
<keyword id="KW-0963">Cytoplasm</keyword>
<keyword id="KW-0206">Cytoskeleton</keyword>
<keyword id="KW-0493">Microtubule</keyword>
<keyword id="KW-0498">Mitosis</keyword>
<keyword id="KW-1185">Reference proteome</keyword>
<keyword id="KW-0677">Repeat</keyword>
<keyword id="KW-0813">Transport</keyword>
<keyword id="KW-0853">WD repeat</keyword>
<proteinExistence type="inferred from homology"/>
<reference key="1">
    <citation type="journal article" date="2010" name="PLoS Genet.">
        <title>De novo assembly of a 40 Mb eukaryotic genome from short sequence reads: Sordaria macrospora, a model organism for fungal morphogenesis.</title>
        <authorList>
            <person name="Nowrousian M."/>
            <person name="Stajich J.E."/>
            <person name="Chu M."/>
            <person name="Engh I."/>
            <person name="Espagne E."/>
            <person name="Halliday K."/>
            <person name="Kamerewerd J."/>
            <person name="Kempken F."/>
            <person name="Knab B."/>
            <person name="Kuo H.-C."/>
            <person name="Osiewacz H.D."/>
            <person name="Poeggeler S."/>
            <person name="Read N.D."/>
            <person name="Seiler S."/>
            <person name="Smith K.M."/>
            <person name="Zickler D."/>
            <person name="Kueck U."/>
            <person name="Freitag M."/>
        </authorList>
    </citation>
    <scope>NUCLEOTIDE SEQUENCE [LARGE SCALE GENOMIC DNA]</scope>
    <source>
        <strain>ATCC MYA-333 / DSM 997 / K(L3346) / K-hell</strain>
    </source>
</reference>
<organism>
    <name type="scientific">Sordaria macrospora (strain ATCC MYA-333 / DSM 997 / K(L3346) / K-hell)</name>
    <dbReference type="NCBI Taxonomy" id="771870"/>
    <lineage>
        <taxon>Eukaryota</taxon>
        <taxon>Fungi</taxon>
        <taxon>Dikarya</taxon>
        <taxon>Ascomycota</taxon>
        <taxon>Pezizomycotina</taxon>
        <taxon>Sordariomycetes</taxon>
        <taxon>Sordariomycetidae</taxon>
        <taxon>Sordariales</taxon>
        <taxon>Sordariaceae</taxon>
        <taxon>Sordaria</taxon>
    </lineage>
</organism>
<comment type="function">
    <text evidence="1">Positively regulates the activity of the minus-end directed microtubule motor protein dynein. May enhance dynein-mediated microtubule sliding by targeting dynein to the microtubule plus end. Required for nuclear migration during vegetative growth as well as development. Required for retrograde early endosome (EE) transport from the hyphal tip. Required for localization of dynein to the mitotic spindle poles. Recruits additional proteins to the dynein complex at SPBs.</text>
</comment>
<comment type="subunit">
    <text evidence="1">Self-associates. Interacts with NDL1 and dynein.</text>
</comment>
<comment type="subcellular location">
    <subcellularLocation>
        <location evidence="1">Cytoplasm</location>
        <location evidence="1">Cytoskeleton</location>
    </subcellularLocation>
    <subcellularLocation>
        <location evidence="1">Cytoplasm</location>
        <location evidence="1">Cytoskeleton</location>
        <location evidence="1">Spindle pole</location>
    </subcellularLocation>
    <text evidence="1">Localizes to the plus ends of microtubules at the hyphal tip and the mitotic spindle poles.</text>
</comment>
<comment type="domain">
    <text evidence="1">Dimerization mediated by the LisH domain may be required to activate dynein.</text>
</comment>
<comment type="similarity">
    <text evidence="1">Belongs to the WD repeat LIS1/nudF family.</text>
</comment>
<gene>
    <name evidence="1" type="primary">PAC1-1</name>
    <name evidence="1" type="synonym">LIS1-1</name>
    <name type="ORF">SMAC_06094</name>
</gene>